<reference key="1">
    <citation type="journal article" date="1990" name="Mol. Cell. Biol.">
        <title>Molecular cloning of YPT1/SEC4-related cDNAs from an epithelial cell line.</title>
        <authorList>
            <person name="Chavrier P."/>
            <person name="Vingron M."/>
            <person name="Sander C."/>
            <person name="Simons K."/>
            <person name="Zerial M."/>
        </authorList>
    </citation>
    <scope>NUCLEOTIDE SEQUENCE [MRNA]</scope>
    <source>
        <strain>Cocker spaniel</strain>
        <tissue>Kidney</tissue>
    </source>
</reference>
<reference key="2">
    <citation type="journal article" date="2010" name="Hum. Mol. Genet.">
        <title>Interaction of retinitis pigmentosa GTPase regulator (RPGR) with RAB8A GTPase: implications for cilia dysfunction and photoreceptor degeneration.</title>
        <authorList>
            <person name="Murga-Zamalloa C.A."/>
            <person name="Atkins S.J."/>
            <person name="Peranen J."/>
            <person name="Swaroop A."/>
            <person name="Khanna H."/>
        </authorList>
    </citation>
    <scope>SUBCELLULAR LOCATION</scope>
</reference>
<evidence type="ECO:0000250" key="1"/>
<evidence type="ECO:0000250" key="2">
    <source>
        <dbReference type="UniProtKB" id="P35280"/>
    </source>
</evidence>
<evidence type="ECO:0000250" key="3">
    <source>
        <dbReference type="UniProtKB" id="P55258"/>
    </source>
</evidence>
<evidence type="ECO:0000250" key="4">
    <source>
        <dbReference type="UniProtKB" id="P61006"/>
    </source>
</evidence>
<evidence type="ECO:0000250" key="5">
    <source>
        <dbReference type="UniProtKB" id="P62820"/>
    </source>
</evidence>
<evidence type="ECO:0000250" key="6">
    <source>
        <dbReference type="UniProtKB" id="Q92930"/>
    </source>
</evidence>
<evidence type="ECO:0000255" key="7"/>
<evidence type="ECO:0000269" key="8">
    <source>
    </source>
</evidence>
<evidence type="ECO:0000305" key="9"/>
<sequence length="207" mass="23668">MAKTYDYLFKLLLIGDSGVGKTCVLFRFSEDAFNSTFISTIGIDFKIRTIELDGKRIKLQIWDTAGQERFRTITTAYYRGAMGIMLVYDITNEKSFDNIRNWIRNIEEHASADVEKMILGNKCDVNDKRQVSKERGEKLALDYGIKFMETSAKANINVENAFFTLARDIKAKMDKKLEGNSPQGSNQGVKITPDQQKRSSFFRCVLL</sequence>
<gene>
    <name type="primary">RAB8A</name>
    <name type="synonym">MEL</name>
    <name type="synonym">RAB8</name>
</gene>
<protein>
    <recommendedName>
        <fullName>Ras-related protein Rab-8A</fullName>
        <ecNumber evidence="4">3.6.5.2</ecNumber>
    </recommendedName>
    <alternativeName>
        <fullName>Oncogene c-mel</fullName>
    </alternativeName>
</protein>
<keyword id="KW-0072">Autophagy</keyword>
<keyword id="KW-1003">Cell membrane</keyword>
<keyword id="KW-0966">Cell projection</keyword>
<keyword id="KW-0969">Cilium</keyword>
<keyword id="KW-0970">Cilium biogenesis/degradation</keyword>
<keyword id="KW-0963">Cytoplasm</keyword>
<keyword id="KW-0968">Cytoplasmic vesicle</keyword>
<keyword id="KW-0206">Cytoskeleton</keyword>
<keyword id="KW-0967">Endosome</keyword>
<keyword id="KW-0333">Golgi apparatus</keyword>
<keyword id="KW-0342">GTP-binding</keyword>
<keyword id="KW-0378">Hydrolase</keyword>
<keyword id="KW-0449">Lipoprotein</keyword>
<keyword id="KW-0458">Lysosome</keyword>
<keyword id="KW-0460">Magnesium</keyword>
<keyword id="KW-0472">Membrane</keyword>
<keyword id="KW-0479">Metal-binding</keyword>
<keyword id="KW-0488">Methylation</keyword>
<keyword id="KW-0547">Nucleotide-binding</keyword>
<keyword id="KW-0597">Phosphoprotein</keyword>
<keyword id="KW-0636">Prenylation</keyword>
<keyword id="KW-0653">Protein transport</keyword>
<keyword id="KW-0656">Proto-oncogene</keyword>
<keyword id="KW-1185">Reference proteome</keyword>
<keyword id="KW-0813">Transport</keyword>
<dbReference type="EC" id="3.6.5.2" evidence="4"/>
<dbReference type="EMBL" id="X56385">
    <property type="protein sequence ID" value="CAB56776.1"/>
    <property type="molecule type" value="mRNA"/>
</dbReference>
<dbReference type="PIR" id="B36364">
    <property type="entry name" value="B36364"/>
</dbReference>
<dbReference type="RefSeq" id="NP_001003152.1">
    <property type="nucleotide sequence ID" value="NM_001003152.1"/>
</dbReference>
<dbReference type="SMR" id="P61007"/>
<dbReference type="BioGRID" id="139696">
    <property type="interactions" value="1"/>
</dbReference>
<dbReference type="DIP" id="DIP-42002N"/>
<dbReference type="FunCoup" id="P61007">
    <property type="interactions" value="3275"/>
</dbReference>
<dbReference type="IntAct" id="P61007">
    <property type="interactions" value="3"/>
</dbReference>
<dbReference type="MINT" id="P61007"/>
<dbReference type="STRING" id="9615.ENSCAFP00000023207"/>
<dbReference type="PaxDb" id="9612-ENSCAFP00000037722"/>
<dbReference type="Ensembl" id="ENSCAFT00000025007.5">
    <property type="protein sequence ID" value="ENSCAFP00000023207.3"/>
    <property type="gene ID" value="ENSCAFG00000015796.5"/>
</dbReference>
<dbReference type="Ensembl" id="ENSCAFT00030040626.1">
    <property type="protein sequence ID" value="ENSCAFP00030035461.1"/>
    <property type="gene ID" value="ENSCAFG00030022117.1"/>
</dbReference>
<dbReference type="Ensembl" id="ENSCAFT00040034659.1">
    <property type="protein sequence ID" value="ENSCAFP00040030179.1"/>
    <property type="gene ID" value="ENSCAFG00040018726.1"/>
</dbReference>
<dbReference type="Ensembl" id="ENSCAFT00845054077.1">
    <property type="protein sequence ID" value="ENSCAFP00845042481.1"/>
    <property type="gene ID" value="ENSCAFG00845030471.1"/>
</dbReference>
<dbReference type="GeneID" id="403773"/>
<dbReference type="KEGG" id="cfa:403773"/>
<dbReference type="CTD" id="4218"/>
<dbReference type="VEuPathDB" id="HostDB:ENSCAFG00845030471"/>
<dbReference type="VGNC" id="VGNC:47744">
    <property type="gene designation" value="TPM4"/>
</dbReference>
<dbReference type="eggNOG" id="KOG0078">
    <property type="taxonomic scope" value="Eukaryota"/>
</dbReference>
<dbReference type="GeneTree" id="ENSGT00940000157246"/>
<dbReference type="HOGENOM" id="CLU_041217_23_1_1"/>
<dbReference type="InParanoid" id="P61007"/>
<dbReference type="OMA" id="SKMEQNE"/>
<dbReference type="OrthoDB" id="128924at2759"/>
<dbReference type="Reactome" id="R-CFA-2565942">
    <property type="pathway name" value="Regulation of PLK1 Activity at G2/M Transition"/>
</dbReference>
<dbReference type="Reactome" id="R-CFA-5620912">
    <property type="pathway name" value="Anchoring of the basal body to the plasma membrane"/>
</dbReference>
<dbReference type="Reactome" id="R-CFA-5620916">
    <property type="pathway name" value="VxPx cargo-targeting to cilium"/>
</dbReference>
<dbReference type="Reactome" id="R-CFA-8854214">
    <property type="pathway name" value="TBC/RABGAPs"/>
</dbReference>
<dbReference type="Reactome" id="R-CFA-8873719">
    <property type="pathway name" value="RAB geranylgeranylation"/>
</dbReference>
<dbReference type="Reactome" id="R-CFA-8876198">
    <property type="pathway name" value="RAB GEFs exchange GTP for GDP on RABs"/>
</dbReference>
<dbReference type="Proteomes" id="UP000002254">
    <property type="component" value="Chromosome 20"/>
</dbReference>
<dbReference type="Proteomes" id="UP000694429">
    <property type="component" value="Chromosome 20"/>
</dbReference>
<dbReference type="Proteomes" id="UP000694542">
    <property type="component" value="Chromosome 20"/>
</dbReference>
<dbReference type="Proteomes" id="UP000805418">
    <property type="component" value="Chromosome 20"/>
</dbReference>
<dbReference type="Bgee" id="ENSCAFG00000015782">
    <property type="expression patterns" value="Expressed in lymph node and 48 other cell types or tissues"/>
</dbReference>
<dbReference type="GO" id="GO:0005814">
    <property type="term" value="C:centriole"/>
    <property type="evidence" value="ECO:0007669"/>
    <property type="project" value="UniProtKB-SubCell"/>
</dbReference>
<dbReference type="GO" id="GO:0005813">
    <property type="term" value="C:centrosome"/>
    <property type="evidence" value="ECO:0000250"/>
    <property type="project" value="UniProtKB"/>
</dbReference>
<dbReference type="GO" id="GO:0036064">
    <property type="term" value="C:ciliary basal body"/>
    <property type="evidence" value="ECO:0000250"/>
    <property type="project" value="UniProtKB"/>
</dbReference>
<dbReference type="GO" id="GO:0005929">
    <property type="term" value="C:cilium"/>
    <property type="evidence" value="ECO:0000250"/>
    <property type="project" value="UniProtKB"/>
</dbReference>
<dbReference type="GO" id="GO:0010008">
    <property type="term" value="C:endosome membrane"/>
    <property type="evidence" value="ECO:0000250"/>
    <property type="project" value="UniProtKB"/>
</dbReference>
<dbReference type="GO" id="GO:0070382">
    <property type="term" value="C:exocytic vesicle"/>
    <property type="evidence" value="ECO:0000314"/>
    <property type="project" value="CAFA"/>
</dbReference>
<dbReference type="GO" id="GO:0005794">
    <property type="term" value="C:Golgi apparatus"/>
    <property type="evidence" value="ECO:0007669"/>
    <property type="project" value="UniProtKB-SubCell"/>
</dbReference>
<dbReference type="GO" id="GO:0005764">
    <property type="term" value="C:lysosome"/>
    <property type="evidence" value="ECO:0007669"/>
    <property type="project" value="UniProtKB-SubCell"/>
</dbReference>
<dbReference type="GO" id="GO:0030496">
    <property type="term" value="C:midbody"/>
    <property type="evidence" value="ECO:0000250"/>
    <property type="project" value="UniProtKB"/>
</dbReference>
<dbReference type="GO" id="GO:0045335">
    <property type="term" value="C:phagocytic vesicle"/>
    <property type="evidence" value="ECO:0000250"/>
    <property type="project" value="UniProtKB"/>
</dbReference>
<dbReference type="GO" id="GO:0030670">
    <property type="term" value="C:phagocytic vesicle membrane"/>
    <property type="evidence" value="ECO:0007669"/>
    <property type="project" value="UniProtKB-SubCell"/>
</dbReference>
<dbReference type="GO" id="GO:0005886">
    <property type="term" value="C:plasma membrane"/>
    <property type="evidence" value="ECO:0007669"/>
    <property type="project" value="UniProtKB-SubCell"/>
</dbReference>
<dbReference type="GO" id="GO:0055038">
    <property type="term" value="C:recycling endosome membrane"/>
    <property type="evidence" value="ECO:0000250"/>
    <property type="project" value="UniProtKB"/>
</dbReference>
<dbReference type="GO" id="GO:0019003">
    <property type="term" value="F:GDP binding"/>
    <property type="evidence" value="ECO:0000250"/>
    <property type="project" value="UniProtKB"/>
</dbReference>
<dbReference type="GO" id="GO:0005525">
    <property type="term" value="F:GTP binding"/>
    <property type="evidence" value="ECO:0000250"/>
    <property type="project" value="UniProtKB"/>
</dbReference>
<dbReference type="GO" id="GO:0003924">
    <property type="term" value="F:GTPase activity"/>
    <property type="evidence" value="ECO:0007669"/>
    <property type="project" value="InterPro"/>
</dbReference>
<dbReference type="GO" id="GO:0031267">
    <property type="term" value="F:small GTPase binding"/>
    <property type="evidence" value="ECO:0000250"/>
    <property type="project" value="UniProtKB"/>
</dbReference>
<dbReference type="GO" id="GO:0006914">
    <property type="term" value="P:autophagy"/>
    <property type="evidence" value="ECO:0007669"/>
    <property type="project" value="UniProtKB-KW"/>
</dbReference>
<dbReference type="GO" id="GO:0007409">
    <property type="term" value="P:axonogenesis"/>
    <property type="evidence" value="ECO:0000250"/>
    <property type="project" value="UniProtKB"/>
</dbReference>
<dbReference type="GO" id="GO:0032869">
    <property type="term" value="P:cellular response to insulin stimulus"/>
    <property type="evidence" value="ECO:0000250"/>
    <property type="project" value="UniProtKB"/>
</dbReference>
<dbReference type="GO" id="GO:0060271">
    <property type="term" value="P:cilium assembly"/>
    <property type="evidence" value="ECO:0000250"/>
    <property type="project" value="UniProtKB"/>
</dbReference>
<dbReference type="GO" id="GO:0032456">
    <property type="term" value="P:endocytic recycling"/>
    <property type="evidence" value="ECO:0000315"/>
    <property type="project" value="UniProtKB"/>
</dbReference>
<dbReference type="GO" id="GO:0007030">
    <property type="term" value="P:Golgi organization"/>
    <property type="evidence" value="ECO:0000250"/>
    <property type="project" value="UniProtKB"/>
</dbReference>
<dbReference type="GO" id="GO:0061512">
    <property type="term" value="P:protein localization to cilium"/>
    <property type="evidence" value="ECO:0000250"/>
    <property type="project" value="UniProtKB"/>
</dbReference>
<dbReference type="GO" id="GO:0072659">
    <property type="term" value="P:protein localization to plasma membrane"/>
    <property type="evidence" value="ECO:0000250"/>
    <property type="project" value="UniProtKB"/>
</dbReference>
<dbReference type="GO" id="GO:0015031">
    <property type="term" value="P:protein transport"/>
    <property type="evidence" value="ECO:0007669"/>
    <property type="project" value="UniProtKB-KW"/>
</dbReference>
<dbReference type="GO" id="GO:0010506">
    <property type="term" value="P:regulation of autophagy"/>
    <property type="evidence" value="ECO:0000250"/>
    <property type="project" value="UniProtKB"/>
</dbReference>
<dbReference type="CDD" id="cd01867">
    <property type="entry name" value="Rab8_Rab10_Rab13_like"/>
    <property type="match status" value="1"/>
</dbReference>
<dbReference type="FunFam" id="3.40.50.300:FF:000202">
    <property type="entry name" value="ras-related protein Rab-8A"/>
    <property type="match status" value="1"/>
</dbReference>
<dbReference type="Gene3D" id="3.40.50.300">
    <property type="entry name" value="P-loop containing nucleotide triphosphate hydrolases"/>
    <property type="match status" value="1"/>
</dbReference>
<dbReference type="InterPro" id="IPR027417">
    <property type="entry name" value="P-loop_NTPase"/>
</dbReference>
<dbReference type="InterPro" id="IPR005225">
    <property type="entry name" value="Small_GTP-bd"/>
</dbReference>
<dbReference type="InterPro" id="IPR001806">
    <property type="entry name" value="Small_GTPase"/>
</dbReference>
<dbReference type="InterPro" id="IPR050305">
    <property type="entry name" value="Small_GTPase_Rab"/>
</dbReference>
<dbReference type="NCBIfam" id="TIGR00231">
    <property type="entry name" value="small_GTP"/>
    <property type="match status" value="1"/>
</dbReference>
<dbReference type="PANTHER" id="PTHR47980">
    <property type="entry name" value="LD44762P"/>
    <property type="match status" value="1"/>
</dbReference>
<dbReference type="Pfam" id="PF00071">
    <property type="entry name" value="Ras"/>
    <property type="match status" value="1"/>
</dbReference>
<dbReference type="PRINTS" id="PR00449">
    <property type="entry name" value="RASTRNSFRMNG"/>
</dbReference>
<dbReference type="SMART" id="SM00177">
    <property type="entry name" value="ARF"/>
    <property type="match status" value="1"/>
</dbReference>
<dbReference type="SMART" id="SM00175">
    <property type="entry name" value="RAB"/>
    <property type="match status" value="1"/>
</dbReference>
<dbReference type="SMART" id="SM00176">
    <property type="entry name" value="RAN"/>
    <property type="match status" value="1"/>
</dbReference>
<dbReference type="SMART" id="SM00173">
    <property type="entry name" value="RAS"/>
    <property type="match status" value="1"/>
</dbReference>
<dbReference type="SMART" id="SM00174">
    <property type="entry name" value="RHO"/>
    <property type="match status" value="1"/>
</dbReference>
<dbReference type="SUPFAM" id="SSF52540">
    <property type="entry name" value="P-loop containing nucleoside triphosphate hydrolases"/>
    <property type="match status" value="1"/>
</dbReference>
<dbReference type="PROSITE" id="PS51419">
    <property type="entry name" value="RAB"/>
    <property type="match status" value="1"/>
</dbReference>
<comment type="function">
    <text evidence="2 3 4">The small GTPases Rab are key regulators of intracellular membrane trafficking, from the formation of transport vesicles to their fusion with membranes. Rabs cycle between an inactive GDP-bound form and an active GTP-bound form that is able to recruit to membranes different sets of downstream effectors directly responsible for vesicle formation, movement, tethering and fusion. RAB8A is involved in polarized vesicular trafficking and neurotransmitter release. Together with RAB11A, RAB3IP, the exocyst complex, PARD3, PRKCI, ANXA2, CDC42 and DNMBP promotes transcytosis of PODXL to the apical membrane initiation sites (AMIS), apical surface formation and lumenogenesis. Regulates the compacted morphology of the Golgi. Together with MYO5B and RAB11A participates in epithelial cell polarization. Also involved in membrane trafficking to the cilium and ciliogenesis (By similarity). Together with MICALL2, may also regulate adherens junction assembly (By similarity). May play a role in insulin-induced transport to the plasma membrane of the glucose transporter GLUT4 and therefore play a role in glucose homeostasis (By similarity). Involved in autophagy. Participates in the export of a subset of neosynthesized proteins through a Rab8-Rab10-Rab11-dependent endososomal export route. Targeted to and stabilized on stressed lysosomes through LRRK2 phosphorylation. Suppresses stress-induced lysosomal enlargement through EHBP1 and EHNP1L1 effector proteins (By similarity).</text>
</comment>
<comment type="catalytic activity">
    <reaction evidence="4">
        <text>GTP + H2O = GDP + phosphate + H(+)</text>
        <dbReference type="Rhea" id="RHEA:19669"/>
        <dbReference type="ChEBI" id="CHEBI:15377"/>
        <dbReference type="ChEBI" id="CHEBI:15378"/>
        <dbReference type="ChEBI" id="CHEBI:37565"/>
        <dbReference type="ChEBI" id="CHEBI:43474"/>
        <dbReference type="ChEBI" id="CHEBI:58189"/>
        <dbReference type="EC" id="3.6.5.2"/>
    </reaction>
    <physiologicalReaction direction="left-to-right" evidence="4">
        <dbReference type="Rhea" id="RHEA:19670"/>
    </physiologicalReaction>
</comment>
<comment type="cofactor">
    <cofactor evidence="4">
        <name>Mg(2+)</name>
        <dbReference type="ChEBI" id="CHEBI:18420"/>
    </cofactor>
</comment>
<comment type="activity regulation">
    <text evidence="2 4">Regulated by guanine nucleotide exchange factors (GEFs) such as RAB3IP/Rabin8 and RPGR which promote the exchange of bound GDP for free GTP, GTPase activating proteins (GAPs) which increase the GTP hydrolysis activity, and GDP dissociation inhibitors (GDIs) which inhibit the dissociation of the nucleotide from the GTPase (By similarity). Activated in response to insulin (By similarity).</text>
</comment>
<comment type="subunit">
    <text evidence="3 4">Interacts (GTP-bound form) with MICALL1; regulates RAB8A association with recycling endosomes (By similarity). Interacts with MICALL2; competes with RAB13 and is involved in E-cadherin endocytic recycling (By similarity). Interacts (GTP-bound form) with MICAL1, MICALCL, MICAL3, EHBP1 and EHBP1L1; at least in case of MICAL1, MICALCL, MICAL3 and EHBP1L1 two molecules of RAB8A can bind to one molecule of the effector protein; ternary complexes of RAB8A, RAB13 and either MICAL1 or EHBP1L1 are possible. Interacts with EHD1 (By similarity). Interacts with MAP4K2 and SYTL4 (By similarity). Interacts with SGSM1 and SGSM3 (By similarity). Interacts with RABIF, RIMS2, RPH3A and RPH3A (By similarity). Interacts with OPTN. Interacts with RAB3IP, RAB3IP functions as guanine exchange factor (GEF). Interacts with MYO5B. Interacts with CIMAP3. Interacts with BIRC6/bruce. Interacts with OCRL (By similarity). Interacts with AHI1 (By similarity). Interacts with DCDC1. Interacts with LRRK2; interaction facilitates phosphorylation of Thr-72. Interacts with RAB31P, GDI1, GDI2, CHM, CHML, RABGGTA, RABGGTB, TBC1D15 and INPP5B; these interactions are dependent on Thr-72 not being phosphorylated. Interacts with RILPL1 and RILPL2; these interactions are dependent on the phosphorylation of Thr-72 by LRRK2. Interacts with DZIP1; prevents inhibition by the GDP-dissociation inhibitor GDI2. Interacts (in GDP-bound form) with RAB3IP/Rabin8, RAB3IP functions as guanine exchange factor (GEF) towards RAB8A (By similarity). Interacts (in GDP-bound form) with RPGR, RPGR functions as GEF towards RAB8A (By similarity).</text>
</comment>
<comment type="interaction">
    <interactant intactId="EBI-7473289">
        <id>P61007</id>
    </interactant>
    <interactant intactId="EBI-16153101">
        <id>Q8BMD2-1</id>
        <label>Dzip1</label>
    </interactant>
    <organismsDiffer>true</organismsDiffer>
    <experiments>3</experiments>
</comment>
<comment type="interaction">
    <interactant intactId="EBI-7473289">
        <id>P61007</id>
    </interactant>
    <interactant intactId="EBI-1049143">
        <id>P50395</id>
        <label>GDI2</label>
    </interactant>
    <organismsDiffer>true</organismsDiffer>
    <experiments>2</experiments>
</comment>
<comment type="subcellular location">
    <subcellularLocation>
        <location evidence="3">Cell membrane</location>
        <topology evidence="3">Lipid-anchor</topology>
        <orientation evidence="3">Cytoplasmic side</orientation>
    </subcellularLocation>
    <subcellularLocation>
        <location evidence="4">Golgi apparatus</location>
    </subcellularLocation>
    <subcellularLocation>
        <location evidence="4">Endosome membrane</location>
    </subcellularLocation>
    <subcellularLocation>
        <location evidence="4">Recycling endosome membrane</location>
    </subcellularLocation>
    <subcellularLocation>
        <location evidence="8">Cell projection</location>
        <location evidence="8">Cilium</location>
    </subcellularLocation>
    <subcellularLocation>
        <location evidence="4 6">Cytoplasmic vesicle</location>
        <location evidence="4 6">Phagosome membrane</location>
        <topology evidence="6">Lipid-anchor</topology>
        <orientation evidence="6">Cytoplasmic side</orientation>
    </subcellularLocation>
    <subcellularLocation>
        <location evidence="3">Cytoplasm</location>
        <location evidence="3">Cytoskeleton</location>
        <location evidence="3">Microtubule organizing center</location>
        <location evidence="3">Centrosome</location>
        <location evidence="3">Centriole</location>
    </subcellularLocation>
    <subcellularLocation>
        <location evidence="3">Cytoplasm</location>
        <location evidence="3">Cytoskeleton</location>
        <location evidence="3">Cilium basal body</location>
    </subcellularLocation>
    <subcellularLocation>
        <location evidence="4">Midbody</location>
    </subcellularLocation>
    <subcellularLocation>
        <location evidence="4">Cytoplasm</location>
    </subcellularLocation>
    <subcellularLocation>
        <location evidence="4">Lysosome</location>
    </subcellularLocation>
    <text evidence="4 8">Colocalizes with OPTN at the Golgi complex and in vesicular structures close to the plasma membrane. In the GDP-bound form, present in the perinuclear region. Shows a polarized distribution to distal regions of cell protrusions in the GTP-bound form. Colocalizes with PARD3, PRKCI, EXOC5, OCLN, PODXL and RAB11A in apical membrane initiation sites (AMIS) during the generation of apical surface and lumenogenesis. Localizes to tubular recycling endosome. Recruited to phagosomes containing S.aureus or Mycobacterium (By similarity). Non-phosphorylated RAB8A predominantly localizes to the cytoplasm whereas phosphorylated RAB8A localizes to the membrane (By similarity). Localizes to enlarged lysosomes through LRRK2 phosphorylation (By similarity). Colocalizes with RPGR at the primary cilia of epithelial cells (PubMed:20631154).</text>
</comment>
<comment type="domain">
    <text evidence="5">Switch 1, switch 2 and the interswitch regions are characteristic of Rab GTPases and mediate the interactions with Rab downstream effectors. The switch regions undergo conformational changes upon nucleotide binding which drives interaction with specific sets of effector proteins, with most effectors only binding to GTP-bound Rab.</text>
</comment>
<comment type="PTM">
    <text evidence="4">Phosphorylation of Thr-72 in the switch II region by LRRK2 prevents the association of RAB regulatory proteins, including CHM, CHML and RAB GDP dissociation inhibitors GDI1 and GDI2 (By similarity). Phosphorylation by LRRK2 is required for localization to stressed lysosomes (By similarity).</text>
</comment>
<comment type="similarity">
    <text evidence="9">Belongs to the small GTPase superfamily. Rab family.</text>
</comment>
<proteinExistence type="evidence at protein level"/>
<feature type="chain" id="PRO_0000121129" description="Ras-related protein Rab-8A">
    <location>
        <begin position="1"/>
        <end position="204"/>
    </location>
</feature>
<feature type="propeptide" id="PRO_0000370792" description="Removed in mature form" evidence="7">
    <location>
        <begin position="205"/>
        <end position="207"/>
    </location>
</feature>
<feature type="short sequence motif" description="Switch 1" evidence="5">
    <location>
        <begin position="31"/>
        <end position="45"/>
    </location>
</feature>
<feature type="short sequence motif" description="Switch 2" evidence="5">
    <location>
        <begin position="63"/>
        <end position="80"/>
    </location>
</feature>
<feature type="binding site" evidence="4">
    <location>
        <position position="17"/>
    </location>
    <ligand>
        <name>GTP</name>
        <dbReference type="ChEBI" id="CHEBI:37565"/>
    </ligand>
</feature>
<feature type="binding site" evidence="4">
    <location>
        <position position="18"/>
    </location>
    <ligand>
        <name>GTP</name>
        <dbReference type="ChEBI" id="CHEBI:37565"/>
    </ligand>
</feature>
<feature type="binding site" evidence="4">
    <location>
        <position position="19"/>
    </location>
    <ligand>
        <name>GTP</name>
        <dbReference type="ChEBI" id="CHEBI:37565"/>
    </ligand>
</feature>
<feature type="binding site" evidence="4">
    <location>
        <position position="20"/>
    </location>
    <ligand>
        <name>GTP</name>
        <dbReference type="ChEBI" id="CHEBI:37565"/>
    </ligand>
</feature>
<feature type="binding site" evidence="4">
    <location>
        <position position="21"/>
    </location>
    <ligand>
        <name>GTP</name>
        <dbReference type="ChEBI" id="CHEBI:37565"/>
    </ligand>
</feature>
<feature type="binding site" evidence="4">
    <location>
        <position position="22"/>
    </location>
    <ligand>
        <name>GTP</name>
        <dbReference type="ChEBI" id="CHEBI:37565"/>
    </ligand>
</feature>
<feature type="binding site" evidence="4">
    <location>
        <position position="22"/>
    </location>
    <ligand>
        <name>Mg(2+)</name>
        <dbReference type="ChEBI" id="CHEBI:18420"/>
    </ligand>
</feature>
<feature type="binding site" evidence="4">
    <location>
        <position position="23"/>
    </location>
    <ligand>
        <name>GTP</name>
        <dbReference type="ChEBI" id="CHEBI:37565"/>
    </ligand>
</feature>
<feature type="binding site" evidence="4">
    <location>
        <position position="35"/>
    </location>
    <ligand>
        <name>GTP</name>
        <dbReference type="ChEBI" id="CHEBI:37565"/>
    </ligand>
</feature>
<feature type="binding site" evidence="4">
    <location>
        <position position="39"/>
    </location>
    <ligand>
        <name>GTP</name>
        <dbReference type="ChEBI" id="CHEBI:37565"/>
    </ligand>
</feature>
<feature type="binding site" evidence="4">
    <location>
        <position position="40"/>
    </location>
    <ligand>
        <name>GTP</name>
        <dbReference type="ChEBI" id="CHEBI:37565"/>
    </ligand>
</feature>
<feature type="binding site" evidence="4">
    <location>
        <position position="40"/>
    </location>
    <ligand>
        <name>Mg(2+)</name>
        <dbReference type="ChEBI" id="CHEBI:18420"/>
    </ligand>
</feature>
<feature type="binding site" evidence="4">
    <location>
        <position position="63"/>
    </location>
    <ligand>
        <name>Mg(2+)</name>
        <dbReference type="ChEBI" id="CHEBI:18420"/>
    </ligand>
</feature>
<feature type="binding site" evidence="4">
    <location>
        <position position="66"/>
    </location>
    <ligand>
        <name>GTP</name>
        <dbReference type="ChEBI" id="CHEBI:37565"/>
    </ligand>
</feature>
<feature type="binding site" evidence="4">
    <location>
        <position position="121"/>
    </location>
    <ligand>
        <name>GTP</name>
        <dbReference type="ChEBI" id="CHEBI:37565"/>
    </ligand>
</feature>
<feature type="binding site" evidence="4">
    <location>
        <position position="122"/>
    </location>
    <ligand>
        <name>GTP</name>
        <dbReference type="ChEBI" id="CHEBI:37565"/>
    </ligand>
</feature>
<feature type="binding site" evidence="4">
    <location>
        <position position="124"/>
    </location>
    <ligand>
        <name>GTP</name>
        <dbReference type="ChEBI" id="CHEBI:37565"/>
    </ligand>
</feature>
<feature type="binding site" evidence="4">
    <location>
        <position position="152"/>
    </location>
    <ligand>
        <name>GTP</name>
        <dbReference type="ChEBI" id="CHEBI:37565"/>
    </ligand>
</feature>
<feature type="binding site" evidence="4">
    <location>
        <position position="153"/>
    </location>
    <ligand>
        <name>GTP</name>
        <dbReference type="ChEBI" id="CHEBI:37565"/>
    </ligand>
</feature>
<feature type="modified residue" description="Phosphothreonine" evidence="4">
    <location>
        <position position="72"/>
    </location>
</feature>
<feature type="modified residue" description="Phosphoserine" evidence="4">
    <location>
        <position position="181"/>
    </location>
</feature>
<feature type="modified residue" description="Phosphoserine" evidence="4">
    <location>
        <position position="185"/>
    </location>
</feature>
<feature type="modified residue" description="Cysteine methyl ester" evidence="7">
    <location>
        <position position="204"/>
    </location>
</feature>
<feature type="lipid moiety-binding region" description="S-geranylgeranyl cysteine" evidence="1">
    <location>
        <position position="204"/>
    </location>
</feature>
<name>RAB8A_CANLF</name>
<accession>P61007</accession>
<accession>P24407</accession>
<organism>
    <name type="scientific">Canis lupus familiaris</name>
    <name type="common">Dog</name>
    <name type="synonym">Canis familiaris</name>
    <dbReference type="NCBI Taxonomy" id="9615"/>
    <lineage>
        <taxon>Eukaryota</taxon>
        <taxon>Metazoa</taxon>
        <taxon>Chordata</taxon>
        <taxon>Craniata</taxon>
        <taxon>Vertebrata</taxon>
        <taxon>Euteleostomi</taxon>
        <taxon>Mammalia</taxon>
        <taxon>Eutheria</taxon>
        <taxon>Laurasiatheria</taxon>
        <taxon>Carnivora</taxon>
        <taxon>Caniformia</taxon>
        <taxon>Canidae</taxon>
        <taxon>Canis</taxon>
    </lineage>
</organism>